<accession>Q6GH17</accession>
<organism>
    <name type="scientific">Staphylococcus aureus (strain MRSA252)</name>
    <dbReference type="NCBI Taxonomy" id="282458"/>
    <lineage>
        <taxon>Bacteria</taxon>
        <taxon>Bacillati</taxon>
        <taxon>Bacillota</taxon>
        <taxon>Bacilli</taxon>
        <taxon>Bacillales</taxon>
        <taxon>Staphylococcaceae</taxon>
        <taxon>Staphylococcus</taxon>
    </lineage>
</organism>
<proteinExistence type="inferred from homology"/>
<reference key="1">
    <citation type="journal article" date="2004" name="Proc. Natl. Acad. Sci. U.S.A.">
        <title>Complete genomes of two clinical Staphylococcus aureus strains: evidence for the rapid evolution of virulence and drug resistance.</title>
        <authorList>
            <person name="Holden M.T.G."/>
            <person name="Feil E.J."/>
            <person name="Lindsay J.A."/>
            <person name="Peacock S.J."/>
            <person name="Day N.P.J."/>
            <person name="Enright M.C."/>
            <person name="Foster T.J."/>
            <person name="Moore C.E."/>
            <person name="Hurst L."/>
            <person name="Atkin R."/>
            <person name="Barron A."/>
            <person name="Bason N."/>
            <person name="Bentley S.D."/>
            <person name="Chillingworth C."/>
            <person name="Chillingworth T."/>
            <person name="Churcher C."/>
            <person name="Clark L."/>
            <person name="Corton C."/>
            <person name="Cronin A."/>
            <person name="Doggett J."/>
            <person name="Dowd L."/>
            <person name="Feltwell T."/>
            <person name="Hance Z."/>
            <person name="Harris B."/>
            <person name="Hauser H."/>
            <person name="Holroyd S."/>
            <person name="Jagels K."/>
            <person name="James K.D."/>
            <person name="Lennard N."/>
            <person name="Line A."/>
            <person name="Mayes R."/>
            <person name="Moule S."/>
            <person name="Mungall K."/>
            <person name="Ormond D."/>
            <person name="Quail M.A."/>
            <person name="Rabbinowitsch E."/>
            <person name="Rutherford K.M."/>
            <person name="Sanders M."/>
            <person name="Sharp S."/>
            <person name="Simmonds M."/>
            <person name="Stevens K."/>
            <person name="Whitehead S."/>
            <person name="Barrell B.G."/>
            <person name="Spratt B.G."/>
            <person name="Parkhill J."/>
        </authorList>
    </citation>
    <scope>NUCLEOTIDE SEQUENCE [LARGE SCALE GENOMIC DNA]</scope>
    <source>
        <strain>MRSA252</strain>
    </source>
</reference>
<dbReference type="EMBL" id="BX571856">
    <property type="protein sequence ID" value="CAG40400.1"/>
    <property type="molecule type" value="Genomic_DNA"/>
</dbReference>
<dbReference type="RefSeq" id="WP_001162351.1">
    <property type="nucleotide sequence ID" value="NC_002952.2"/>
</dbReference>
<dbReference type="SMR" id="Q6GH17"/>
<dbReference type="KEGG" id="sar:SAR1403"/>
<dbReference type="HOGENOM" id="CLU_064885_0_0_9"/>
<dbReference type="Proteomes" id="UP000000596">
    <property type="component" value="Chromosome"/>
</dbReference>
<dbReference type="Gene3D" id="2.40.50.140">
    <property type="entry name" value="Nucleic acid-binding proteins"/>
    <property type="match status" value="2"/>
</dbReference>
<dbReference type="Gene3D" id="1.10.10.10">
    <property type="entry name" value="Winged helix-like DNA-binding domain superfamily/Winged helix DNA-binding domain"/>
    <property type="match status" value="1"/>
</dbReference>
<dbReference type="InterPro" id="IPR014464">
    <property type="entry name" value="CvfB_fam"/>
</dbReference>
<dbReference type="InterPro" id="IPR048588">
    <property type="entry name" value="CvfB_S1_2nd"/>
</dbReference>
<dbReference type="InterPro" id="IPR048587">
    <property type="entry name" value="CvfB_S1_3rd"/>
</dbReference>
<dbReference type="InterPro" id="IPR039566">
    <property type="entry name" value="CvfB_S1_st"/>
</dbReference>
<dbReference type="InterPro" id="IPR040764">
    <property type="entry name" value="CvfB_WH"/>
</dbReference>
<dbReference type="InterPro" id="IPR012340">
    <property type="entry name" value="NA-bd_OB-fold"/>
</dbReference>
<dbReference type="InterPro" id="IPR036388">
    <property type="entry name" value="WH-like_DNA-bd_sf"/>
</dbReference>
<dbReference type="PANTHER" id="PTHR37296">
    <property type="entry name" value="CONSERVED VIRULENCE FACTOR B"/>
    <property type="match status" value="1"/>
</dbReference>
<dbReference type="PANTHER" id="PTHR37296:SF1">
    <property type="entry name" value="CONSERVED VIRULENCE FACTOR B"/>
    <property type="match status" value="1"/>
</dbReference>
<dbReference type="Pfam" id="PF21191">
    <property type="entry name" value="CvfB_1st"/>
    <property type="match status" value="1"/>
</dbReference>
<dbReference type="Pfam" id="PF21543">
    <property type="entry name" value="CvfB_2nd"/>
    <property type="match status" value="1"/>
</dbReference>
<dbReference type="Pfam" id="PF17783">
    <property type="entry name" value="CvfB_WH"/>
    <property type="match status" value="1"/>
</dbReference>
<dbReference type="Pfam" id="PF13509">
    <property type="entry name" value="S1_2"/>
    <property type="match status" value="1"/>
</dbReference>
<dbReference type="PIRSF" id="PIRSF012524">
    <property type="entry name" value="YitL_S1"/>
    <property type="match status" value="1"/>
</dbReference>
<name>CVFB_STAAR</name>
<sequence length="300" mass="34208">MALDKDIVGSIEFLEVVGLQGSTYLLKGPNGENVKLNQSEMNDDDELEVGEEYSFFIYPNRSGELFATQNMPDITKDKYDFAKVLKTDRDGARIDVGLPREVLVPWEDLPKVKSLWPQPGDHLLVTLRIDRENHMYGRLASESVVENMFTPVHDDNLKNEVIEAKPYRVLRIGSFLLSESGYKIFVHESERKAEPRLGESVQVRIIGHNDKGELNGSFLPLAHERLDDDGQVIFDLLVEYDGELPFWDKSSPEAIKEVFNMSKGSFKRAIGHLYKHKIINIETGKITLTKKGWSRIESKE</sequence>
<gene>
    <name type="primary">cvfB</name>
    <name type="ordered locus">SAR1403</name>
</gene>
<keyword id="KW-0843">Virulence</keyword>
<protein>
    <recommendedName>
        <fullName>Conserved virulence factor B</fullName>
    </recommendedName>
</protein>
<comment type="function">
    <text evidence="1">Contributes to the expression of virulence factors and to pathogenicity. Involved in the production of hemolysin, DNase, protease and protein A (By similarity).</text>
</comment>
<comment type="similarity">
    <text evidence="2">Belongs to the CvfB family.</text>
</comment>
<evidence type="ECO:0000250" key="1"/>
<evidence type="ECO:0000305" key="2"/>
<feature type="chain" id="PRO_0000282291" description="Conserved virulence factor B">
    <location>
        <begin position="1"/>
        <end position="300"/>
    </location>
</feature>